<feature type="peptide" id="PRO_0000413765" description="Antimicrobial protein 2" evidence="1">
    <location>
        <begin position="1"/>
        <end position="6" status="greater than"/>
    </location>
</feature>
<feature type="non-terminal residue" evidence="2">
    <location>
        <position position="6"/>
    </location>
</feature>
<evidence type="ECO:0000269" key="1">
    <source ref="1"/>
</evidence>
<evidence type="ECO:0000303" key="2">
    <source ref="1"/>
</evidence>
<evidence type="ECO:0000305" key="3"/>
<proteinExistence type="evidence at protein level"/>
<dbReference type="GO" id="GO:0005576">
    <property type="term" value="C:extracellular region"/>
    <property type="evidence" value="ECO:0007669"/>
    <property type="project" value="UniProtKB-SubCell"/>
</dbReference>
<dbReference type="GO" id="GO:0042742">
    <property type="term" value="P:defense response to bacterium"/>
    <property type="evidence" value="ECO:0007669"/>
    <property type="project" value="UniProtKB-KW"/>
</dbReference>
<sequence>HSPGGA</sequence>
<organism>
    <name type="scientific">Scylla serrata</name>
    <name type="common">Mud crab</name>
    <dbReference type="NCBI Taxonomy" id="6761"/>
    <lineage>
        <taxon>Eukaryota</taxon>
        <taxon>Metazoa</taxon>
        <taxon>Ecdysozoa</taxon>
        <taxon>Arthropoda</taxon>
        <taxon>Crustacea</taxon>
        <taxon>Multicrustacea</taxon>
        <taxon>Malacostraca</taxon>
        <taxon>Eumalacostraca</taxon>
        <taxon>Eucarida</taxon>
        <taxon>Decapoda</taxon>
        <taxon>Pleocyemata</taxon>
        <taxon>Brachyura</taxon>
        <taxon>Eubrachyura</taxon>
        <taxon>Portunoidea</taxon>
        <taxon>Portunidae</taxon>
        <taxon>Portuninae</taxon>
        <taxon>Scylla</taxon>
    </lineage>
</organism>
<keyword id="KW-0044">Antibiotic</keyword>
<keyword id="KW-0929">Antimicrobial</keyword>
<keyword id="KW-0903">Direct protein sequencing</keyword>
<keyword id="KW-0964">Secreted</keyword>
<accession>B3A0L8</accession>
<reference evidence="3" key="1">
    <citation type="submission" date="2011-09" db="UniProtKB">
        <title>Antibacterial protein (Scylla serrata).</title>
        <authorList>
            <person name="Meiyalagan V."/>
            <person name="Arumugam M."/>
        </authorList>
    </citation>
    <scope>PROTEIN SEQUENCE</scope>
    <scope>FUNCTION</scope>
    <scope>SUBCELLULAR LOCATION</scope>
    <source>
        <tissue evidence="1">Serum</tissue>
    </source>
</reference>
<protein>
    <recommendedName>
        <fullName>Antimicrobial protein 2</fullName>
    </recommendedName>
</protein>
<name>AMP2_SCYSE</name>
<comment type="function">
    <text evidence="1">Has antibacterial activity against the Gram-positive bacterium B.flexus and the Gram-negative bacteria E.coli and V.harveyi along with two other Vibrio species.</text>
</comment>
<comment type="subcellular location">
    <subcellularLocation>
        <location evidence="1">Secreted</location>
    </subcellularLocation>
</comment>